<protein>
    <recommendedName>
        <fullName>Chaperone protein DnaK</fullName>
    </recommendedName>
    <alternativeName>
        <fullName>HSP70</fullName>
    </alternativeName>
    <alternativeName>
        <fullName>Heat shock 70 kDa protein</fullName>
    </alternativeName>
    <alternativeName>
        <fullName>Heat shock protein 70</fullName>
    </alternativeName>
</protein>
<organism>
    <name type="scientific">Mycobacterium avium</name>
    <dbReference type="NCBI Taxonomy" id="1764"/>
    <lineage>
        <taxon>Bacteria</taxon>
        <taxon>Bacillati</taxon>
        <taxon>Actinomycetota</taxon>
        <taxon>Actinomycetes</taxon>
        <taxon>Mycobacteriales</taxon>
        <taxon>Mycobacteriaceae</taxon>
        <taxon>Mycobacterium</taxon>
        <taxon>Mycobacterium avium complex (MAC)</taxon>
    </lineage>
</organism>
<comment type="function">
    <text evidence="1">Acts as a chaperone.</text>
</comment>
<comment type="induction">
    <text evidence="1">By stress conditions e.g. heat shock (By similarity).</text>
</comment>
<comment type="similarity">
    <text evidence="2">Belongs to the heat shock protein 70 family.</text>
</comment>
<sequence length="20" mass="1926">ARAVGIDLGTTNAVVAVLEG</sequence>
<reference key="1">
    <citation type="journal article" date="1996" name="Microb. Pathog.">
        <title>Isolation and characterization of a 70 kDa protein from Mycobacterium avium.</title>
        <authorList>
            <person name="Ratnakar P."/>
            <person name="Rao S.P."/>
            <person name="Catanzaro A."/>
        </authorList>
    </citation>
    <scope>PROTEIN SEQUENCE</scope>
    <source>
        <strain>ATCC 25291 / DSM 44156 / NCTC 13034 / TMC 724</strain>
    </source>
</reference>
<accession>P80462</accession>
<keyword id="KW-0067">ATP-binding</keyword>
<keyword id="KW-0143">Chaperone</keyword>
<keyword id="KW-0903">Direct protein sequencing</keyword>
<keyword id="KW-0547">Nucleotide-binding</keyword>
<keyword id="KW-0346">Stress response</keyword>
<feature type="chain" id="PRO_0000078487" description="Chaperone protein DnaK">
    <location>
        <begin position="1"/>
        <end position="20" status="greater than"/>
    </location>
</feature>
<feature type="sequence variant">
    <original>V</original>
    <variation>G</variation>
    <location>
        <position position="17"/>
    </location>
</feature>
<feature type="non-terminal residue">
    <location>
        <position position="20"/>
    </location>
</feature>
<evidence type="ECO:0000250" key="1"/>
<evidence type="ECO:0000305" key="2"/>
<gene>
    <name type="primary">dnaK</name>
</gene>
<proteinExistence type="evidence at protein level"/>
<name>DNAK_MYCAV</name>
<dbReference type="GO" id="GO:0005524">
    <property type="term" value="F:ATP binding"/>
    <property type="evidence" value="ECO:0007669"/>
    <property type="project" value="UniProtKB-KW"/>
</dbReference>